<organism>
    <name type="scientific">Aliivibrio fischeri (strain ATCC 700601 / ES114)</name>
    <name type="common">Vibrio fischeri</name>
    <dbReference type="NCBI Taxonomy" id="312309"/>
    <lineage>
        <taxon>Bacteria</taxon>
        <taxon>Pseudomonadati</taxon>
        <taxon>Pseudomonadota</taxon>
        <taxon>Gammaproteobacteria</taxon>
        <taxon>Vibrionales</taxon>
        <taxon>Vibrionaceae</taxon>
        <taxon>Aliivibrio</taxon>
    </lineage>
</organism>
<keyword id="KW-0004">4Fe-4S</keyword>
<keyword id="KW-0963">Cytoplasm</keyword>
<keyword id="KW-1015">Disulfide bond</keyword>
<keyword id="KW-0408">Iron</keyword>
<keyword id="KW-0411">Iron-sulfur</keyword>
<keyword id="KW-0479">Metal-binding</keyword>
<keyword id="KW-0489">Methyltransferase</keyword>
<keyword id="KW-1185">Reference proteome</keyword>
<keyword id="KW-0698">rRNA processing</keyword>
<keyword id="KW-0949">S-adenosyl-L-methionine</keyword>
<keyword id="KW-0808">Transferase</keyword>
<keyword id="KW-0819">tRNA processing</keyword>
<proteinExistence type="inferred from homology"/>
<protein>
    <recommendedName>
        <fullName evidence="1">Dual-specificity RNA methyltransferase RlmN</fullName>
        <ecNumber evidence="1">2.1.1.192</ecNumber>
    </recommendedName>
    <alternativeName>
        <fullName evidence="1">23S rRNA (adenine(2503)-C(2))-methyltransferase</fullName>
    </alternativeName>
    <alternativeName>
        <fullName evidence="1">23S rRNA m2A2503 methyltransferase</fullName>
    </alternativeName>
    <alternativeName>
        <fullName evidence="1">Ribosomal RNA large subunit methyltransferase N</fullName>
    </alternativeName>
    <alternativeName>
        <fullName evidence="1">tRNA (adenine(37)-C(2))-methyltransferase</fullName>
    </alternativeName>
    <alternativeName>
        <fullName evidence="1">tRNA m2A37 methyltransferase</fullName>
    </alternativeName>
</protein>
<reference key="1">
    <citation type="journal article" date="2005" name="Proc. Natl. Acad. Sci. U.S.A.">
        <title>Complete genome sequence of Vibrio fischeri: a symbiotic bacterium with pathogenic congeners.</title>
        <authorList>
            <person name="Ruby E.G."/>
            <person name="Urbanowski M."/>
            <person name="Campbell J."/>
            <person name="Dunn A."/>
            <person name="Faini M."/>
            <person name="Gunsalus R."/>
            <person name="Lostroh P."/>
            <person name="Lupp C."/>
            <person name="McCann J."/>
            <person name="Millikan D."/>
            <person name="Schaefer A."/>
            <person name="Stabb E."/>
            <person name="Stevens A."/>
            <person name="Visick K."/>
            <person name="Whistler C."/>
            <person name="Greenberg E.P."/>
        </authorList>
    </citation>
    <scope>NUCLEOTIDE SEQUENCE [LARGE SCALE GENOMIC DNA]</scope>
    <source>
        <strain>ATCC 700601 / ES114</strain>
    </source>
</reference>
<accession>Q5E775</accession>
<feature type="chain" id="PRO_0000350517" description="Dual-specificity RNA methyltransferase RlmN">
    <location>
        <begin position="1"/>
        <end position="372"/>
    </location>
</feature>
<feature type="domain" description="Radical SAM core" evidence="2">
    <location>
        <begin position="100"/>
        <end position="339"/>
    </location>
</feature>
<feature type="active site" description="Proton acceptor" evidence="1">
    <location>
        <position position="94"/>
    </location>
</feature>
<feature type="active site" description="S-methylcysteine intermediate" evidence="1">
    <location>
        <position position="344"/>
    </location>
</feature>
<feature type="binding site" evidence="1">
    <location>
        <position position="114"/>
    </location>
    <ligand>
        <name>[4Fe-4S] cluster</name>
        <dbReference type="ChEBI" id="CHEBI:49883"/>
        <note>4Fe-4S-S-AdoMet</note>
    </ligand>
</feature>
<feature type="binding site" evidence="1">
    <location>
        <position position="118"/>
    </location>
    <ligand>
        <name>[4Fe-4S] cluster</name>
        <dbReference type="ChEBI" id="CHEBI:49883"/>
        <note>4Fe-4S-S-AdoMet</note>
    </ligand>
</feature>
<feature type="binding site" evidence="1">
    <location>
        <position position="121"/>
    </location>
    <ligand>
        <name>[4Fe-4S] cluster</name>
        <dbReference type="ChEBI" id="CHEBI:49883"/>
        <note>4Fe-4S-S-AdoMet</note>
    </ligand>
</feature>
<feature type="binding site" evidence="1">
    <location>
        <begin position="168"/>
        <end position="169"/>
    </location>
    <ligand>
        <name>S-adenosyl-L-methionine</name>
        <dbReference type="ChEBI" id="CHEBI:59789"/>
    </ligand>
</feature>
<feature type="binding site" evidence="1">
    <location>
        <position position="200"/>
    </location>
    <ligand>
        <name>S-adenosyl-L-methionine</name>
        <dbReference type="ChEBI" id="CHEBI:59789"/>
    </ligand>
</feature>
<feature type="binding site" evidence="1">
    <location>
        <begin position="222"/>
        <end position="224"/>
    </location>
    <ligand>
        <name>S-adenosyl-L-methionine</name>
        <dbReference type="ChEBI" id="CHEBI:59789"/>
    </ligand>
</feature>
<feature type="binding site" evidence="1">
    <location>
        <position position="301"/>
    </location>
    <ligand>
        <name>S-adenosyl-L-methionine</name>
        <dbReference type="ChEBI" id="CHEBI:59789"/>
    </ligand>
</feature>
<feature type="disulfide bond" description="(transient)" evidence="1">
    <location>
        <begin position="107"/>
        <end position="344"/>
    </location>
</feature>
<sequence>MTTAKINLLDFDRKGLRAFFSEELGEKAFRADQVMKWMYHFGCDDFDQMNNINKKLREKLKHKCEIRAPYVSEAQHSSDGTIKWAMKVGDQDVETVYIPDGDRATLCVSSQVGCALECKFCSTAQQGFNRNLKVSEIVGQIWRAAREIGLEKETGRRPITNVVMMGMGEPLLNMKNLIPALEIMLDDLGFALSKRRVTVSTSGVVSGLDQMTGKIDVALAISLHAPTDELRSQIMPINDRWDIDAFLASVRRYIASSNANRGRVTVEYVLLDHVNDDMDHARQLAELLKDTPAKINLIPFNPYPGSPYKKPSNSRIDRFMKTLMEYDYTVTIRKTRGDDIDAACGQLVGDVIDRTKRTKVKQQGEAIPVKTV</sequence>
<dbReference type="EC" id="2.1.1.192" evidence="1"/>
<dbReference type="EMBL" id="CP000020">
    <property type="protein sequence ID" value="AAW85121.1"/>
    <property type="molecule type" value="Genomic_DNA"/>
</dbReference>
<dbReference type="RefSeq" id="WP_005417927.1">
    <property type="nucleotide sequence ID" value="NZ_CAWLES010000001.1"/>
</dbReference>
<dbReference type="RefSeq" id="YP_204009.1">
    <property type="nucleotide sequence ID" value="NC_006840.2"/>
</dbReference>
<dbReference type="SMR" id="Q5E775"/>
<dbReference type="STRING" id="312309.VF_0626"/>
<dbReference type="EnsemblBacteria" id="AAW85121">
    <property type="protein sequence ID" value="AAW85121"/>
    <property type="gene ID" value="VF_0626"/>
</dbReference>
<dbReference type="GeneID" id="54163279"/>
<dbReference type="KEGG" id="vfi:VF_0626"/>
<dbReference type="PATRIC" id="fig|312309.11.peg.618"/>
<dbReference type="eggNOG" id="COG0820">
    <property type="taxonomic scope" value="Bacteria"/>
</dbReference>
<dbReference type="HOGENOM" id="CLU_029101_0_0_6"/>
<dbReference type="OrthoDB" id="9793973at2"/>
<dbReference type="Proteomes" id="UP000000537">
    <property type="component" value="Chromosome I"/>
</dbReference>
<dbReference type="GO" id="GO:0005737">
    <property type="term" value="C:cytoplasm"/>
    <property type="evidence" value="ECO:0007669"/>
    <property type="project" value="UniProtKB-SubCell"/>
</dbReference>
<dbReference type="GO" id="GO:0051539">
    <property type="term" value="F:4 iron, 4 sulfur cluster binding"/>
    <property type="evidence" value="ECO:0007669"/>
    <property type="project" value="UniProtKB-UniRule"/>
</dbReference>
<dbReference type="GO" id="GO:0046872">
    <property type="term" value="F:metal ion binding"/>
    <property type="evidence" value="ECO:0007669"/>
    <property type="project" value="UniProtKB-KW"/>
</dbReference>
<dbReference type="GO" id="GO:0070040">
    <property type="term" value="F:rRNA (adenine(2503)-C2-)-methyltransferase activity"/>
    <property type="evidence" value="ECO:0007669"/>
    <property type="project" value="UniProtKB-UniRule"/>
</dbReference>
<dbReference type="GO" id="GO:0019843">
    <property type="term" value="F:rRNA binding"/>
    <property type="evidence" value="ECO:0007669"/>
    <property type="project" value="UniProtKB-UniRule"/>
</dbReference>
<dbReference type="GO" id="GO:0002935">
    <property type="term" value="F:tRNA (adenine(37)-C2)-methyltransferase activity"/>
    <property type="evidence" value="ECO:0007669"/>
    <property type="project" value="UniProtKB-UniRule"/>
</dbReference>
<dbReference type="GO" id="GO:0000049">
    <property type="term" value="F:tRNA binding"/>
    <property type="evidence" value="ECO:0007669"/>
    <property type="project" value="UniProtKB-UniRule"/>
</dbReference>
<dbReference type="GO" id="GO:0070475">
    <property type="term" value="P:rRNA base methylation"/>
    <property type="evidence" value="ECO:0007669"/>
    <property type="project" value="UniProtKB-UniRule"/>
</dbReference>
<dbReference type="GO" id="GO:0030488">
    <property type="term" value="P:tRNA methylation"/>
    <property type="evidence" value="ECO:0007669"/>
    <property type="project" value="UniProtKB-UniRule"/>
</dbReference>
<dbReference type="CDD" id="cd01335">
    <property type="entry name" value="Radical_SAM"/>
    <property type="match status" value="1"/>
</dbReference>
<dbReference type="FunFam" id="1.10.150.530:FF:000003">
    <property type="entry name" value="Dual-specificity RNA methyltransferase RlmN"/>
    <property type="match status" value="1"/>
</dbReference>
<dbReference type="FunFam" id="3.20.20.70:FF:000008">
    <property type="entry name" value="Dual-specificity RNA methyltransferase RlmN"/>
    <property type="match status" value="1"/>
</dbReference>
<dbReference type="Gene3D" id="1.10.150.530">
    <property type="match status" value="1"/>
</dbReference>
<dbReference type="Gene3D" id="3.20.20.70">
    <property type="entry name" value="Aldolase class I"/>
    <property type="match status" value="1"/>
</dbReference>
<dbReference type="HAMAP" id="MF_01849">
    <property type="entry name" value="RNA_methyltr_RlmN"/>
    <property type="match status" value="1"/>
</dbReference>
<dbReference type="InterPro" id="IPR013785">
    <property type="entry name" value="Aldolase_TIM"/>
</dbReference>
<dbReference type="InterPro" id="IPR040072">
    <property type="entry name" value="Methyltransferase_A"/>
</dbReference>
<dbReference type="InterPro" id="IPR048641">
    <property type="entry name" value="RlmN_N"/>
</dbReference>
<dbReference type="InterPro" id="IPR027492">
    <property type="entry name" value="RNA_MTrfase_RlmN"/>
</dbReference>
<dbReference type="InterPro" id="IPR004383">
    <property type="entry name" value="rRNA_lsu_MTrfase_RlmN/Cfr"/>
</dbReference>
<dbReference type="InterPro" id="IPR007197">
    <property type="entry name" value="rSAM"/>
</dbReference>
<dbReference type="NCBIfam" id="NF008396">
    <property type="entry name" value="PRK11194.1"/>
    <property type="match status" value="1"/>
</dbReference>
<dbReference type="NCBIfam" id="TIGR00048">
    <property type="entry name" value="rRNA_mod_RlmN"/>
    <property type="match status" value="1"/>
</dbReference>
<dbReference type="PANTHER" id="PTHR30544">
    <property type="entry name" value="23S RRNA METHYLTRANSFERASE"/>
    <property type="match status" value="1"/>
</dbReference>
<dbReference type="PANTHER" id="PTHR30544:SF5">
    <property type="entry name" value="RADICAL SAM CORE DOMAIN-CONTAINING PROTEIN"/>
    <property type="match status" value="1"/>
</dbReference>
<dbReference type="Pfam" id="PF04055">
    <property type="entry name" value="Radical_SAM"/>
    <property type="match status" value="1"/>
</dbReference>
<dbReference type="Pfam" id="PF21016">
    <property type="entry name" value="RlmN_N"/>
    <property type="match status" value="1"/>
</dbReference>
<dbReference type="PIRSF" id="PIRSF006004">
    <property type="entry name" value="CHP00048"/>
    <property type="match status" value="1"/>
</dbReference>
<dbReference type="SFLD" id="SFLDF00275">
    <property type="entry name" value="adenosine_C2_methyltransferase"/>
    <property type="match status" value="1"/>
</dbReference>
<dbReference type="SFLD" id="SFLDG01062">
    <property type="entry name" value="methyltransferase_(Class_A)"/>
    <property type="match status" value="1"/>
</dbReference>
<dbReference type="SUPFAM" id="SSF102114">
    <property type="entry name" value="Radical SAM enzymes"/>
    <property type="match status" value="1"/>
</dbReference>
<dbReference type="PROSITE" id="PS51918">
    <property type="entry name" value="RADICAL_SAM"/>
    <property type="match status" value="1"/>
</dbReference>
<evidence type="ECO:0000255" key="1">
    <source>
        <dbReference type="HAMAP-Rule" id="MF_01849"/>
    </source>
</evidence>
<evidence type="ECO:0000255" key="2">
    <source>
        <dbReference type="PROSITE-ProRule" id="PRU01266"/>
    </source>
</evidence>
<name>RLMN_ALIF1</name>
<gene>
    <name evidence="1" type="primary">rlmN</name>
    <name type="ordered locus">VF_0626</name>
</gene>
<comment type="function">
    <text evidence="1">Specifically methylates position 2 of adenine 2503 in 23S rRNA and position 2 of adenine 37 in tRNAs. m2A2503 modification seems to play a crucial role in the proofreading step occurring at the peptidyl transferase center and thus would serve to optimize ribosomal fidelity.</text>
</comment>
<comment type="catalytic activity">
    <reaction evidence="1">
        <text>adenosine(2503) in 23S rRNA + 2 reduced [2Fe-2S]-[ferredoxin] + 2 S-adenosyl-L-methionine = 2-methyladenosine(2503) in 23S rRNA + 5'-deoxyadenosine + L-methionine + 2 oxidized [2Fe-2S]-[ferredoxin] + S-adenosyl-L-homocysteine</text>
        <dbReference type="Rhea" id="RHEA:42916"/>
        <dbReference type="Rhea" id="RHEA-COMP:10000"/>
        <dbReference type="Rhea" id="RHEA-COMP:10001"/>
        <dbReference type="Rhea" id="RHEA-COMP:10152"/>
        <dbReference type="Rhea" id="RHEA-COMP:10282"/>
        <dbReference type="ChEBI" id="CHEBI:17319"/>
        <dbReference type="ChEBI" id="CHEBI:33737"/>
        <dbReference type="ChEBI" id="CHEBI:33738"/>
        <dbReference type="ChEBI" id="CHEBI:57844"/>
        <dbReference type="ChEBI" id="CHEBI:57856"/>
        <dbReference type="ChEBI" id="CHEBI:59789"/>
        <dbReference type="ChEBI" id="CHEBI:74411"/>
        <dbReference type="ChEBI" id="CHEBI:74497"/>
        <dbReference type="EC" id="2.1.1.192"/>
    </reaction>
</comment>
<comment type="catalytic activity">
    <reaction evidence="1">
        <text>adenosine(37) in tRNA + 2 reduced [2Fe-2S]-[ferredoxin] + 2 S-adenosyl-L-methionine = 2-methyladenosine(37) in tRNA + 5'-deoxyadenosine + L-methionine + 2 oxidized [2Fe-2S]-[ferredoxin] + S-adenosyl-L-homocysteine</text>
        <dbReference type="Rhea" id="RHEA:43332"/>
        <dbReference type="Rhea" id="RHEA-COMP:10000"/>
        <dbReference type="Rhea" id="RHEA-COMP:10001"/>
        <dbReference type="Rhea" id="RHEA-COMP:10162"/>
        <dbReference type="Rhea" id="RHEA-COMP:10485"/>
        <dbReference type="ChEBI" id="CHEBI:17319"/>
        <dbReference type="ChEBI" id="CHEBI:33737"/>
        <dbReference type="ChEBI" id="CHEBI:33738"/>
        <dbReference type="ChEBI" id="CHEBI:57844"/>
        <dbReference type="ChEBI" id="CHEBI:57856"/>
        <dbReference type="ChEBI" id="CHEBI:59789"/>
        <dbReference type="ChEBI" id="CHEBI:74411"/>
        <dbReference type="ChEBI" id="CHEBI:74497"/>
        <dbReference type="EC" id="2.1.1.192"/>
    </reaction>
</comment>
<comment type="cofactor">
    <cofactor evidence="1">
        <name>[4Fe-4S] cluster</name>
        <dbReference type="ChEBI" id="CHEBI:49883"/>
    </cofactor>
    <text evidence="1">Binds 1 [4Fe-4S] cluster. The cluster is coordinated with 3 cysteines and an exchangeable S-adenosyl-L-methionine.</text>
</comment>
<comment type="subcellular location">
    <subcellularLocation>
        <location evidence="1">Cytoplasm</location>
    </subcellularLocation>
</comment>
<comment type="miscellaneous">
    <text evidence="1">Reaction proceeds by a ping-pong mechanism involving intermediate methylation of a conserved cysteine residue.</text>
</comment>
<comment type="similarity">
    <text evidence="1">Belongs to the radical SAM superfamily. RlmN family.</text>
</comment>